<organism>
    <name type="scientific">Alcanivorax borkumensis (strain ATCC 700651 / DSM 11573 / NCIMB 13689 / SK2)</name>
    <dbReference type="NCBI Taxonomy" id="393595"/>
    <lineage>
        <taxon>Bacteria</taxon>
        <taxon>Pseudomonadati</taxon>
        <taxon>Pseudomonadota</taxon>
        <taxon>Gammaproteobacteria</taxon>
        <taxon>Oceanospirillales</taxon>
        <taxon>Alcanivoracaceae</taxon>
        <taxon>Alcanivorax</taxon>
    </lineage>
</organism>
<accession>Q0VKY4</accession>
<sequence length="229" mass="26103">MNNSAFFRLQQLISPSLPIGAFTYSQGMEWAVECGWIKNADDLHCWLESLLQSSVQTLELPVLARLYHASCHQDREAFTHWAHTLLAWRETRELRMEECQRGHALTMVLDRLPDAANWPELQQPEWRDALAQTQLAGFALASARWGIELQQALNGYLWSWLENMVIVAVKLIPLGQSDGQRELYRFSDQLAAITQHALAMDDDDIGSSSPAMAIASCLHETQYCRLFRS</sequence>
<dbReference type="EMBL" id="AM286690">
    <property type="protein sequence ID" value="CAL18164.1"/>
    <property type="molecule type" value="Genomic_DNA"/>
</dbReference>
<dbReference type="RefSeq" id="WP_011589987.1">
    <property type="nucleotide sequence ID" value="NC_008260.1"/>
</dbReference>
<dbReference type="SMR" id="Q0VKY4"/>
<dbReference type="STRING" id="393595.ABO_2716"/>
<dbReference type="KEGG" id="abo:ABO_2716"/>
<dbReference type="eggNOG" id="COG0830">
    <property type="taxonomic scope" value="Bacteria"/>
</dbReference>
<dbReference type="HOGENOM" id="CLU_049215_2_1_6"/>
<dbReference type="OrthoDB" id="9798772at2"/>
<dbReference type="Proteomes" id="UP000008871">
    <property type="component" value="Chromosome"/>
</dbReference>
<dbReference type="GO" id="GO:0005737">
    <property type="term" value="C:cytoplasm"/>
    <property type="evidence" value="ECO:0007669"/>
    <property type="project" value="UniProtKB-SubCell"/>
</dbReference>
<dbReference type="GO" id="GO:0016151">
    <property type="term" value="F:nickel cation binding"/>
    <property type="evidence" value="ECO:0007669"/>
    <property type="project" value="UniProtKB-UniRule"/>
</dbReference>
<dbReference type="Gene3D" id="1.10.4190.10">
    <property type="entry name" value="Urease accessory protein UreF"/>
    <property type="match status" value="1"/>
</dbReference>
<dbReference type="HAMAP" id="MF_01385">
    <property type="entry name" value="UreF"/>
    <property type="match status" value="1"/>
</dbReference>
<dbReference type="InterPro" id="IPR002639">
    <property type="entry name" value="UreF"/>
</dbReference>
<dbReference type="InterPro" id="IPR038277">
    <property type="entry name" value="UreF_sf"/>
</dbReference>
<dbReference type="PANTHER" id="PTHR33620">
    <property type="entry name" value="UREASE ACCESSORY PROTEIN F"/>
    <property type="match status" value="1"/>
</dbReference>
<dbReference type="PANTHER" id="PTHR33620:SF1">
    <property type="entry name" value="UREASE ACCESSORY PROTEIN F"/>
    <property type="match status" value="1"/>
</dbReference>
<dbReference type="Pfam" id="PF01730">
    <property type="entry name" value="UreF"/>
    <property type="match status" value="1"/>
</dbReference>
<dbReference type="PIRSF" id="PIRSF009467">
    <property type="entry name" value="Ureas_acces_UreF"/>
    <property type="match status" value="1"/>
</dbReference>
<proteinExistence type="inferred from homology"/>
<name>UREF_ALCBS</name>
<protein>
    <recommendedName>
        <fullName evidence="1">Urease accessory protein UreF</fullName>
    </recommendedName>
</protein>
<feature type="chain" id="PRO_0000344068" description="Urease accessory protein UreF">
    <location>
        <begin position="1"/>
        <end position="229"/>
    </location>
</feature>
<gene>
    <name evidence="1" type="primary">ureF</name>
    <name type="ordered locus">ABO_2716</name>
</gene>
<evidence type="ECO:0000255" key="1">
    <source>
        <dbReference type="HAMAP-Rule" id="MF_01385"/>
    </source>
</evidence>
<reference key="1">
    <citation type="journal article" date="2006" name="Nat. Biotechnol.">
        <title>Genome sequence of the ubiquitous hydrocarbon-degrading marine bacterium Alcanivorax borkumensis.</title>
        <authorList>
            <person name="Schneiker S."/>
            <person name="Martins dos Santos V.A.P."/>
            <person name="Bartels D."/>
            <person name="Bekel T."/>
            <person name="Brecht M."/>
            <person name="Buhrmester J."/>
            <person name="Chernikova T.N."/>
            <person name="Denaro R."/>
            <person name="Ferrer M."/>
            <person name="Gertler C."/>
            <person name="Goesmann A."/>
            <person name="Golyshina O.V."/>
            <person name="Kaminski F."/>
            <person name="Khachane A.N."/>
            <person name="Lang S."/>
            <person name="Linke B."/>
            <person name="McHardy A.C."/>
            <person name="Meyer F."/>
            <person name="Nechitaylo T."/>
            <person name="Puehler A."/>
            <person name="Regenhardt D."/>
            <person name="Rupp O."/>
            <person name="Sabirova J.S."/>
            <person name="Selbitschka W."/>
            <person name="Yakimov M.M."/>
            <person name="Timmis K.N."/>
            <person name="Vorhoelter F.-J."/>
            <person name="Weidner S."/>
            <person name="Kaiser O."/>
            <person name="Golyshin P.N."/>
        </authorList>
    </citation>
    <scope>NUCLEOTIDE SEQUENCE [LARGE SCALE GENOMIC DNA]</scope>
    <source>
        <strain>ATCC 700651 / DSM 11573 / NCIMB 13689 / SK2</strain>
    </source>
</reference>
<comment type="function">
    <text evidence="1">Required for maturation of urease via the functional incorporation of the urease nickel metallocenter.</text>
</comment>
<comment type="subunit">
    <text evidence="1">UreD, UreF and UreG form a complex that acts as a GTP-hydrolysis-dependent molecular chaperone, activating the urease apoprotein by helping to assemble the nickel containing metallocenter of UreC. The UreE protein probably delivers the nickel.</text>
</comment>
<comment type="subcellular location">
    <subcellularLocation>
        <location evidence="1">Cytoplasm</location>
    </subcellularLocation>
</comment>
<comment type="similarity">
    <text evidence="1">Belongs to the UreF family.</text>
</comment>
<keyword id="KW-0143">Chaperone</keyword>
<keyword id="KW-0963">Cytoplasm</keyword>
<keyword id="KW-0996">Nickel insertion</keyword>
<keyword id="KW-1185">Reference proteome</keyword>